<name>NAGB_SHIBS</name>
<dbReference type="EC" id="3.5.99.6" evidence="1"/>
<dbReference type="EMBL" id="CP000036">
    <property type="protein sequence ID" value="ABB65232.1"/>
    <property type="molecule type" value="Genomic_DNA"/>
</dbReference>
<dbReference type="RefSeq" id="WP_001237072.1">
    <property type="nucleotide sequence ID" value="NC_007613.1"/>
</dbReference>
<dbReference type="SMR" id="Q324M6"/>
<dbReference type="GeneID" id="93776807"/>
<dbReference type="KEGG" id="sbo:SBO_0540"/>
<dbReference type="HOGENOM" id="CLU_049611_0_1_6"/>
<dbReference type="UniPathway" id="UPA00629">
    <property type="reaction ID" value="UER00684"/>
</dbReference>
<dbReference type="Proteomes" id="UP000007067">
    <property type="component" value="Chromosome"/>
</dbReference>
<dbReference type="GO" id="GO:0005829">
    <property type="term" value="C:cytosol"/>
    <property type="evidence" value="ECO:0007669"/>
    <property type="project" value="TreeGrafter"/>
</dbReference>
<dbReference type="GO" id="GO:0004342">
    <property type="term" value="F:glucosamine-6-phosphate deaminase activity"/>
    <property type="evidence" value="ECO:0007669"/>
    <property type="project" value="UniProtKB-UniRule"/>
</dbReference>
<dbReference type="GO" id="GO:0042802">
    <property type="term" value="F:identical protein binding"/>
    <property type="evidence" value="ECO:0007669"/>
    <property type="project" value="TreeGrafter"/>
</dbReference>
<dbReference type="GO" id="GO:0005975">
    <property type="term" value="P:carbohydrate metabolic process"/>
    <property type="evidence" value="ECO:0007669"/>
    <property type="project" value="InterPro"/>
</dbReference>
<dbReference type="GO" id="GO:0006043">
    <property type="term" value="P:glucosamine catabolic process"/>
    <property type="evidence" value="ECO:0007669"/>
    <property type="project" value="TreeGrafter"/>
</dbReference>
<dbReference type="GO" id="GO:0006046">
    <property type="term" value="P:N-acetylglucosamine catabolic process"/>
    <property type="evidence" value="ECO:0007669"/>
    <property type="project" value="TreeGrafter"/>
</dbReference>
<dbReference type="GO" id="GO:0019262">
    <property type="term" value="P:N-acetylneuraminate catabolic process"/>
    <property type="evidence" value="ECO:0007669"/>
    <property type="project" value="UniProtKB-UniRule"/>
</dbReference>
<dbReference type="CDD" id="cd01399">
    <property type="entry name" value="GlcN6P_deaminase"/>
    <property type="match status" value="1"/>
</dbReference>
<dbReference type="FunFam" id="3.40.50.1360:FF:000002">
    <property type="entry name" value="Glucosamine-6-phosphate deaminase"/>
    <property type="match status" value="1"/>
</dbReference>
<dbReference type="Gene3D" id="3.40.50.1360">
    <property type="match status" value="1"/>
</dbReference>
<dbReference type="HAMAP" id="MF_01241">
    <property type="entry name" value="GlcN6P_deamin"/>
    <property type="match status" value="1"/>
</dbReference>
<dbReference type="InterPro" id="IPR006148">
    <property type="entry name" value="Glc/Gal-6P_isomerase"/>
</dbReference>
<dbReference type="InterPro" id="IPR004547">
    <property type="entry name" value="Glucosamine6P_isomerase"/>
</dbReference>
<dbReference type="InterPro" id="IPR018321">
    <property type="entry name" value="Glucosamine6P_isomerase_CS"/>
</dbReference>
<dbReference type="InterPro" id="IPR037171">
    <property type="entry name" value="NagB/RpiA_transferase-like"/>
</dbReference>
<dbReference type="NCBIfam" id="TIGR00502">
    <property type="entry name" value="nagB"/>
    <property type="match status" value="1"/>
</dbReference>
<dbReference type="NCBIfam" id="NF001685">
    <property type="entry name" value="PRK00443.1-5"/>
    <property type="match status" value="1"/>
</dbReference>
<dbReference type="PANTHER" id="PTHR11280">
    <property type="entry name" value="GLUCOSAMINE-6-PHOSPHATE ISOMERASE"/>
    <property type="match status" value="1"/>
</dbReference>
<dbReference type="PANTHER" id="PTHR11280:SF5">
    <property type="entry name" value="GLUCOSAMINE-6-PHOSPHATE ISOMERASE"/>
    <property type="match status" value="1"/>
</dbReference>
<dbReference type="Pfam" id="PF01182">
    <property type="entry name" value="Glucosamine_iso"/>
    <property type="match status" value="1"/>
</dbReference>
<dbReference type="SUPFAM" id="SSF100950">
    <property type="entry name" value="NagB/RpiA/CoA transferase-like"/>
    <property type="match status" value="1"/>
</dbReference>
<dbReference type="PROSITE" id="PS01161">
    <property type="entry name" value="GLC_GALNAC_ISOMERASE"/>
    <property type="match status" value="1"/>
</dbReference>
<comment type="function">
    <text evidence="1">Catalyzes the reversible isomerization-deamination of glucosamine 6-phosphate (GlcN6P) to form fructose 6-phosphate (Fru6P) and ammonium ion.</text>
</comment>
<comment type="catalytic activity">
    <reaction evidence="1">
        <text>alpha-D-glucosamine 6-phosphate + H2O = beta-D-fructose 6-phosphate + NH4(+)</text>
        <dbReference type="Rhea" id="RHEA:12172"/>
        <dbReference type="ChEBI" id="CHEBI:15377"/>
        <dbReference type="ChEBI" id="CHEBI:28938"/>
        <dbReference type="ChEBI" id="CHEBI:57634"/>
        <dbReference type="ChEBI" id="CHEBI:75989"/>
        <dbReference type="EC" id="3.5.99.6"/>
    </reaction>
</comment>
<comment type="activity regulation">
    <text evidence="1">Allosterically activated by N-acetylglucosamine 6-phosphate (GlcNAc6P).</text>
</comment>
<comment type="pathway">
    <text evidence="1">Amino-sugar metabolism; N-acetylneuraminate degradation; D-fructose 6-phosphate from N-acetylneuraminate: step 5/5.</text>
</comment>
<comment type="subunit">
    <text evidence="1">Homohexamer; trimer of disulfide-linked dimers.</text>
</comment>
<comment type="similarity">
    <text evidence="1">Belongs to the glucosamine/galactosamine-6-phosphate isomerase family. NagB subfamily.</text>
</comment>
<proteinExistence type="inferred from homology"/>
<feature type="chain" id="PRO_1000067018" description="Glucosamine-6-phosphate deaminase">
    <location>
        <begin position="1"/>
        <end position="266"/>
    </location>
</feature>
<feature type="active site" description="Proton acceptor; for enolization step" evidence="1">
    <location>
        <position position="72"/>
    </location>
</feature>
<feature type="active site" description="For ring-opening step" evidence="1">
    <location>
        <position position="141"/>
    </location>
</feature>
<feature type="active site" description="Proton acceptor; for ring-opening step" evidence="1">
    <location>
        <position position="143"/>
    </location>
</feature>
<feature type="active site" description="For ring-opening step" evidence="1">
    <location>
        <position position="148"/>
    </location>
</feature>
<feature type="site" description="Part of the allosteric site" evidence="1">
    <location>
        <position position="151"/>
    </location>
</feature>
<feature type="site" description="Part of the allosteric site" evidence="1">
    <location>
        <position position="158"/>
    </location>
</feature>
<feature type="site" description="Part of the allosteric site" evidence="1">
    <location>
        <position position="160"/>
    </location>
</feature>
<feature type="site" description="Part of the allosteric site" evidence="1">
    <location>
        <position position="161"/>
    </location>
</feature>
<feature type="site" description="Part of the allosteric site" evidence="1">
    <location>
        <position position="254"/>
    </location>
</feature>
<feature type="disulfide bond" description="Interchain" evidence="1">
    <location>
        <position position="219"/>
    </location>
</feature>
<reference key="1">
    <citation type="journal article" date="2005" name="Nucleic Acids Res.">
        <title>Genome dynamics and diversity of Shigella species, the etiologic agents of bacillary dysentery.</title>
        <authorList>
            <person name="Yang F."/>
            <person name="Yang J."/>
            <person name="Zhang X."/>
            <person name="Chen L."/>
            <person name="Jiang Y."/>
            <person name="Yan Y."/>
            <person name="Tang X."/>
            <person name="Wang J."/>
            <person name="Xiong Z."/>
            <person name="Dong J."/>
            <person name="Xue Y."/>
            <person name="Zhu Y."/>
            <person name="Xu X."/>
            <person name="Sun L."/>
            <person name="Chen S."/>
            <person name="Nie H."/>
            <person name="Peng J."/>
            <person name="Xu J."/>
            <person name="Wang Y."/>
            <person name="Yuan Z."/>
            <person name="Wen Y."/>
            <person name="Yao Z."/>
            <person name="Shen Y."/>
            <person name="Qiang B."/>
            <person name="Hou Y."/>
            <person name="Yu J."/>
            <person name="Jin Q."/>
        </authorList>
    </citation>
    <scope>NUCLEOTIDE SEQUENCE [LARGE SCALE GENOMIC DNA]</scope>
    <source>
        <strain>Sb227</strain>
    </source>
</reference>
<sequence>MRLIPLTTAEQVGKWAARHIVNRINAFKPTADRPFVLGLPTGGTPMTTYKALVEMHKAGQVSFKHVVTFNMDEYVGLPKEHPESYYSFMHRNFFDHVDIPAENINLLNGNAPDIDAECRQYEEKIRSYGKIHLFMGGVGNDGHIAFNEPASSLASRTRIKTLTHDTRVANSRFFDNDVNQVPKYALTVGVGTLLDAEEVMILVLGSQKALALQAAVEGCVNHMWTISCLQLHPKAIMVCDEPSTMELKVKTLRYFNELEAENIKGL</sequence>
<keyword id="KW-0021">Allosteric enzyme</keyword>
<keyword id="KW-0119">Carbohydrate metabolism</keyword>
<keyword id="KW-1015">Disulfide bond</keyword>
<keyword id="KW-0378">Hydrolase</keyword>
<evidence type="ECO:0000255" key="1">
    <source>
        <dbReference type="HAMAP-Rule" id="MF_01241"/>
    </source>
</evidence>
<accession>Q324M6</accession>
<organism>
    <name type="scientific">Shigella boydii serotype 4 (strain Sb227)</name>
    <dbReference type="NCBI Taxonomy" id="300268"/>
    <lineage>
        <taxon>Bacteria</taxon>
        <taxon>Pseudomonadati</taxon>
        <taxon>Pseudomonadota</taxon>
        <taxon>Gammaproteobacteria</taxon>
        <taxon>Enterobacterales</taxon>
        <taxon>Enterobacteriaceae</taxon>
        <taxon>Shigella</taxon>
    </lineage>
</organism>
<gene>
    <name evidence="1" type="primary">nagB</name>
    <name type="ordered locus">SBO_0540</name>
</gene>
<protein>
    <recommendedName>
        <fullName evidence="1">Glucosamine-6-phosphate deaminase</fullName>
        <ecNumber evidence="1">3.5.99.6</ecNumber>
    </recommendedName>
    <alternativeName>
        <fullName evidence="1">GlcN6P deaminase</fullName>
        <shortName evidence="1">GNPDA</shortName>
    </alternativeName>
    <alternativeName>
        <fullName evidence="1">Glucosamine-6-phosphate isomerase</fullName>
    </alternativeName>
</protein>